<evidence type="ECO:0000255" key="1">
    <source>
        <dbReference type="HAMAP-Rule" id="MF_00088"/>
    </source>
</evidence>
<keyword id="KW-0963">Cytoplasm</keyword>
<keyword id="KW-1185">Reference proteome</keyword>
<keyword id="KW-0694">RNA-binding</keyword>
<sequence>MSTVVVDAVEHVVRGIVDNPDDVRVDLVISRRGRTVEVHVHPDDLGKVIGRGGRTATALRKLVAGIGGRGIRVDVVDTDQ</sequence>
<accession>O33015</accession>
<proteinExistence type="inferred from homology"/>
<dbReference type="EMBL" id="Z97369">
    <property type="protein sequence ID" value="CAB10627.1"/>
    <property type="molecule type" value="Genomic_DNA"/>
</dbReference>
<dbReference type="EMBL" id="AL583922">
    <property type="protein sequence ID" value="CAC30568.1"/>
    <property type="molecule type" value="Genomic_DNA"/>
</dbReference>
<dbReference type="PIR" id="C87111">
    <property type="entry name" value="C87111"/>
</dbReference>
<dbReference type="RefSeq" id="NP_302115.1">
    <property type="nucleotide sequence ID" value="NC_002677.1"/>
</dbReference>
<dbReference type="RefSeq" id="WP_010908436.1">
    <property type="nucleotide sequence ID" value="NC_002677.1"/>
</dbReference>
<dbReference type="SMR" id="O33015"/>
<dbReference type="STRING" id="272631.gene:17575458"/>
<dbReference type="KEGG" id="mle:ML1617"/>
<dbReference type="PATRIC" id="fig|272631.5.peg.3043"/>
<dbReference type="Leproma" id="ML1617"/>
<dbReference type="eggNOG" id="COG1837">
    <property type="taxonomic scope" value="Bacteria"/>
</dbReference>
<dbReference type="HOGENOM" id="CLU_132074_3_0_11"/>
<dbReference type="OrthoDB" id="9812389at2"/>
<dbReference type="Proteomes" id="UP000000806">
    <property type="component" value="Chromosome"/>
</dbReference>
<dbReference type="GO" id="GO:0005737">
    <property type="term" value="C:cytoplasm"/>
    <property type="evidence" value="ECO:0007669"/>
    <property type="project" value="UniProtKB-SubCell"/>
</dbReference>
<dbReference type="GO" id="GO:0003723">
    <property type="term" value="F:RNA binding"/>
    <property type="evidence" value="ECO:0007669"/>
    <property type="project" value="UniProtKB-UniRule"/>
</dbReference>
<dbReference type="CDD" id="cd22533">
    <property type="entry name" value="KH-II_YlqC-like"/>
    <property type="match status" value="1"/>
</dbReference>
<dbReference type="Gene3D" id="3.30.300.20">
    <property type="match status" value="1"/>
</dbReference>
<dbReference type="HAMAP" id="MF_00088">
    <property type="entry name" value="KhpA"/>
    <property type="match status" value="1"/>
</dbReference>
<dbReference type="InterPro" id="IPR015946">
    <property type="entry name" value="KH_dom-like_a/b"/>
</dbReference>
<dbReference type="InterPro" id="IPR009019">
    <property type="entry name" value="KH_sf_prok-type"/>
</dbReference>
<dbReference type="InterPro" id="IPR020627">
    <property type="entry name" value="KhpA"/>
</dbReference>
<dbReference type="NCBIfam" id="NF002761">
    <property type="entry name" value="PRK02821.1"/>
    <property type="match status" value="1"/>
</dbReference>
<dbReference type="PANTHER" id="PTHR34654:SF1">
    <property type="entry name" value="RNA-BINDING PROTEIN KHPA"/>
    <property type="match status" value="1"/>
</dbReference>
<dbReference type="PANTHER" id="PTHR34654">
    <property type="entry name" value="UPF0109 PROTEIN SCO5592"/>
    <property type="match status" value="1"/>
</dbReference>
<dbReference type="Pfam" id="PF13083">
    <property type="entry name" value="KH_KhpA-B"/>
    <property type="match status" value="1"/>
</dbReference>
<dbReference type="SUPFAM" id="SSF54814">
    <property type="entry name" value="Prokaryotic type KH domain (KH-domain type II)"/>
    <property type="match status" value="1"/>
</dbReference>
<dbReference type="PROSITE" id="PS50084">
    <property type="entry name" value="KH_TYPE_1"/>
    <property type="match status" value="1"/>
</dbReference>
<comment type="function">
    <text evidence="1">A probable RNA-binding protein.</text>
</comment>
<comment type="subcellular location">
    <subcellularLocation>
        <location evidence="1">Cytoplasm</location>
    </subcellularLocation>
</comment>
<comment type="similarity">
    <text evidence="1">Belongs to the KhpA RNA-binding protein family.</text>
</comment>
<reference key="1">
    <citation type="journal article" date="2001" name="Nature">
        <title>Massive gene decay in the leprosy bacillus.</title>
        <authorList>
            <person name="Cole S.T."/>
            <person name="Eiglmeier K."/>
            <person name="Parkhill J."/>
            <person name="James K.D."/>
            <person name="Thomson N.R."/>
            <person name="Wheeler P.R."/>
            <person name="Honore N."/>
            <person name="Garnier T."/>
            <person name="Churcher C.M."/>
            <person name="Harris D.E."/>
            <person name="Mungall K.L."/>
            <person name="Basham D."/>
            <person name="Brown D."/>
            <person name="Chillingworth T."/>
            <person name="Connor R."/>
            <person name="Davies R.M."/>
            <person name="Devlin K."/>
            <person name="Duthoy S."/>
            <person name="Feltwell T."/>
            <person name="Fraser A."/>
            <person name="Hamlin N."/>
            <person name="Holroyd S."/>
            <person name="Hornsby T."/>
            <person name="Jagels K."/>
            <person name="Lacroix C."/>
            <person name="Maclean J."/>
            <person name="Moule S."/>
            <person name="Murphy L.D."/>
            <person name="Oliver K."/>
            <person name="Quail M.A."/>
            <person name="Rajandream M.A."/>
            <person name="Rutherford K.M."/>
            <person name="Rutter S."/>
            <person name="Seeger K."/>
            <person name="Simon S."/>
            <person name="Simmonds M."/>
            <person name="Skelton J."/>
            <person name="Squares R."/>
            <person name="Squares S."/>
            <person name="Stevens K."/>
            <person name="Taylor K."/>
            <person name="Whitehead S."/>
            <person name="Woodward J.R."/>
            <person name="Barrell B.G."/>
        </authorList>
    </citation>
    <scope>NUCLEOTIDE SEQUENCE [LARGE SCALE GENOMIC DNA]</scope>
    <source>
        <strain>TN</strain>
    </source>
</reference>
<feature type="chain" id="PRO_0000163230" description="RNA-binding protein KhpA">
    <location>
        <begin position="1"/>
        <end position="80"/>
    </location>
</feature>
<feature type="domain" description="KH" evidence="1">
    <location>
        <begin position="33"/>
        <end position="80"/>
    </location>
</feature>
<organism>
    <name type="scientific">Mycobacterium leprae (strain TN)</name>
    <dbReference type="NCBI Taxonomy" id="272631"/>
    <lineage>
        <taxon>Bacteria</taxon>
        <taxon>Bacillati</taxon>
        <taxon>Actinomycetota</taxon>
        <taxon>Actinomycetes</taxon>
        <taxon>Mycobacteriales</taxon>
        <taxon>Mycobacteriaceae</taxon>
        <taxon>Mycobacterium</taxon>
    </lineage>
</organism>
<protein>
    <recommendedName>
        <fullName evidence="1">RNA-binding protein KhpA</fullName>
    </recommendedName>
    <alternativeName>
        <fullName evidence="1">KH-domain protein A</fullName>
    </alternativeName>
</protein>
<gene>
    <name evidence="1" type="primary">khpA</name>
    <name type="ordered locus">ML1617</name>
    <name type="ORF">MLCB250.30</name>
</gene>
<name>KHPA_MYCLE</name>